<evidence type="ECO:0000255" key="1">
    <source>
        <dbReference type="HAMAP-Rule" id="MF_00249"/>
    </source>
</evidence>
<comment type="function">
    <text evidence="1">ATPase subunit of a proteasome-like degradation complex; this subunit has chaperone activity. The binding of ATP and its subsequent hydrolysis by HslU are essential for unfolding of protein substrates subsequently hydrolyzed by HslV. HslU recognizes the N-terminal part of its protein substrates and unfolds these before they are guided to HslV for hydrolysis.</text>
</comment>
<comment type="subunit">
    <text evidence="1">A double ring-shaped homohexamer of HslV is capped on each side by a ring-shaped HslU homohexamer. The assembly of the HslU/HslV complex is dependent on binding of ATP.</text>
</comment>
<comment type="subcellular location">
    <subcellularLocation>
        <location evidence="1">Cytoplasm</location>
    </subcellularLocation>
</comment>
<comment type="similarity">
    <text evidence="1">Belongs to the ClpX chaperone family. HslU subfamily.</text>
</comment>
<reference key="1">
    <citation type="submission" date="2007-09" db="EMBL/GenBank/DDBJ databases">
        <title>Complete genome sequence of Rickettsia akari.</title>
        <authorList>
            <person name="Madan A."/>
            <person name="Fahey J."/>
            <person name="Helton E."/>
            <person name="Ketteman M."/>
            <person name="Madan A."/>
            <person name="Rodrigues S."/>
            <person name="Sanchez A."/>
            <person name="Whiting M."/>
            <person name="Dasch G."/>
            <person name="Eremeeva M."/>
        </authorList>
    </citation>
    <scope>NUCLEOTIDE SEQUENCE [LARGE SCALE GENOMIC DNA]</scope>
    <source>
        <strain>Hartford</strain>
    </source>
</reference>
<organism>
    <name type="scientific">Rickettsia akari (strain Hartford)</name>
    <dbReference type="NCBI Taxonomy" id="293614"/>
    <lineage>
        <taxon>Bacteria</taxon>
        <taxon>Pseudomonadati</taxon>
        <taxon>Pseudomonadota</taxon>
        <taxon>Alphaproteobacteria</taxon>
        <taxon>Rickettsiales</taxon>
        <taxon>Rickettsiaceae</taxon>
        <taxon>Rickettsieae</taxon>
        <taxon>Rickettsia</taxon>
        <taxon>spotted fever group</taxon>
    </lineage>
</organism>
<feature type="chain" id="PRO_1000012794" description="ATP-dependent protease ATPase subunit HslU">
    <location>
        <begin position="1"/>
        <end position="450"/>
    </location>
</feature>
<feature type="binding site" evidence="1">
    <location>
        <position position="29"/>
    </location>
    <ligand>
        <name>ATP</name>
        <dbReference type="ChEBI" id="CHEBI:30616"/>
    </ligand>
</feature>
<feature type="binding site" evidence="1">
    <location>
        <begin position="71"/>
        <end position="76"/>
    </location>
    <ligand>
        <name>ATP</name>
        <dbReference type="ChEBI" id="CHEBI:30616"/>
    </ligand>
</feature>
<feature type="binding site" evidence="1">
    <location>
        <position position="261"/>
    </location>
    <ligand>
        <name>ATP</name>
        <dbReference type="ChEBI" id="CHEBI:30616"/>
    </ligand>
</feature>
<feature type="binding site" evidence="1">
    <location>
        <position position="328"/>
    </location>
    <ligand>
        <name>ATP</name>
        <dbReference type="ChEBI" id="CHEBI:30616"/>
    </ligand>
</feature>
<feature type="binding site" evidence="1">
    <location>
        <position position="400"/>
    </location>
    <ligand>
        <name>ATP</name>
        <dbReference type="ChEBI" id="CHEBI:30616"/>
    </ligand>
</feature>
<sequence length="450" mass="49640">MKATKTTYQKDHMGLTPSQIVNELNRFIVGQEKAKKAVAIALRNRCRRKRVEGNLRNEIVPKNILMIGSTGVGKTEIARRLAKLTYSPFYKIEATKFTEVGYVGRDVESIIRDLVEIAVNTEKTLAKTEVDINAREQAIERILDSLVGKTSSSETREKFKEKILNGELDDTEIEISVADTTPVGGGSFEIPGMPGASMGVLNLGDVIGRALGGSKTKTKKMLVKDAMAIIIPEESEKLIDQEKIIQQAINLAENDGIVFIDEIDKIASTGSSGAKNAEISREGVQRDLLPLIEGTTVNTKYGPVKTDHILFIASGAFHIAKPSDLLPELQGRLPIRVELNSLTKDDMIKILLEPETSLIKQYSALIGTEDVYIAFTDSAIEKIADYAITVNLEVEDIGARRLHTILENLLEDISFEASEMKGRKITIDDKFVENQLSKIITNLDLAKFVL</sequence>
<dbReference type="EMBL" id="CP000847">
    <property type="protein sequence ID" value="ABV74775.1"/>
    <property type="molecule type" value="Genomic_DNA"/>
</dbReference>
<dbReference type="RefSeq" id="WP_012149409.1">
    <property type="nucleotide sequence ID" value="NC_009881.1"/>
</dbReference>
<dbReference type="SMR" id="A8GN00"/>
<dbReference type="STRING" id="293614.A1C_02370"/>
<dbReference type="KEGG" id="rak:A1C_02370"/>
<dbReference type="eggNOG" id="COG1220">
    <property type="taxonomic scope" value="Bacteria"/>
</dbReference>
<dbReference type="HOGENOM" id="CLU_033123_0_0_5"/>
<dbReference type="Proteomes" id="UP000006830">
    <property type="component" value="Chromosome"/>
</dbReference>
<dbReference type="GO" id="GO:0009376">
    <property type="term" value="C:HslUV protease complex"/>
    <property type="evidence" value="ECO:0007669"/>
    <property type="project" value="UniProtKB-UniRule"/>
</dbReference>
<dbReference type="GO" id="GO:0005524">
    <property type="term" value="F:ATP binding"/>
    <property type="evidence" value="ECO:0007669"/>
    <property type="project" value="UniProtKB-UniRule"/>
</dbReference>
<dbReference type="GO" id="GO:0016887">
    <property type="term" value="F:ATP hydrolysis activity"/>
    <property type="evidence" value="ECO:0007669"/>
    <property type="project" value="InterPro"/>
</dbReference>
<dbReference type="GO" id="GO:0008233">
    <property type="term" value="F:peptidase activity"/>
    <property type="evidence" value="ECO:0007669"/>
    <property type="project" value="InterPro"/>
</dbReference>
<dbReference type="GO" id="GO:0036402">
    <property type="term" value="F:proteasome-activating activity"/>
    <property type="evidence" value="ECO:0007669"/>
    <property type="project" value="UniProtKB-UniRule"/>
</dbReference>
<dbReference type="GO" id="GO:0043335">
    <property type="term" value="P:protein unfolding"/>
    <property type="evidence" value="ECO:0007669"/>
    <property type="project" value="UniProtKB-UniRule"/>
</dbReference>
<dbReference type="GO" id="GO:0051603">
    <property type="term" value="P:proteolysis involved in protein catabolic process"/>
    <property type="evidence" value="ECO:0007669"/>
    <property type="project" value="TreeGrafter"/>
</dbReference>
<dbReference type="CDD" id="cd19498">
    <property type="entry name" value="RecA-like_HslU"/>
    <property type="match status" value="1"/>
</dbReference>
<dbReference type="FunFam" id="3.40.50.300:FF:000213">
    <property type="entry name" value="ATP-dependent protease ATPase subunit HslU"/>
    <property type="match status" value="1"/>
</dbReference>
<dbReference type="Gene3D" id="1.10.8.60">
    <property type="match status" value="1"/>
</dbReference>
<dbReference type="Gene3D" id="3.40.50.300">
    <property type="entry name" value="P-loop containing nucleotide triphosphate hydrolases"/>
    <property type="match status" value="2"/>
</dbReference>
<dbReference type="HAMAP" id="MF_00249">
    <property type="entry name" value="HslU"/>
    <property type="match status" value="1"/>
</dbReference>
<dbReference type="InterPro" id="IPR003593">
    <property type="entry name" value="AAA+_ATPase"/>
</dbReference>
<dbReference type="InterPro" id="IPR050052">
    <property type="entry name" value="ATP-dep_Clp_protease_ClpX"/>
</dbReference>
<dbReference type="InterPro" id="IPR003959">
    <property type="entry name" value="ATPase_AAA_core"/>
</dbReference>
<dbReference type="InterPro" id="IPR019489">
    <property type="entry name" value="Clp_ATPase_C"/>
</dbReference>
<dbReference type="InterPro" id="IPR004491">
    <property type="entry name" value="HslU"/>
</dbReference>
<dbReference type="InterPro" id="IPR027417">
    <property type="entry name" value="P-loop_NTPase"/>
</dbReference>
<dbReference type="NCBIfam" id="TIGR00390">
    <property type="entry name" value="hslU"/>
    <property type="match status" value="1"/>
</dbReference>
<dbReference type="NCBIfam" id="NF003544">
    <property type="entry name" value="PRK05201.1"/>
    <property type="match status" value="1"/>
</dbReference>
<dbReference type="PANTHER" id="PTHR48102">
    <property type="entry name" value="ATP-DEPENDENT CLP PROTEASE ATP-BINDING SUBUNIT CLPX-LIKE, MITOCHONDRIAL-RELATED"/>
    <property type="match status" value="1"/>
</dbReference>
<dbReference type="PANTHER" id="PTHR48102:SF3">
    <property type="entry name" value="ATP-DEPENDENT PROTEASE ATPASE SUBUNIT HSLU"/>
    <property type="match status" value="1"/>
</dbReference>
<dbReference type="Pfam" id="PF00004">
    <property type="entry name" value="AAA"/>
    <property type="match status" value="1"/>
</dbReference>
<dbReference type="Pfam" id="PF07724">
    <property type="entry name" value="AAA_2"/>
    <property type="match status" value="1"/>
</dbReference>
<dbReference type="SMART" id="SM00382">
    <property type="entry name" value="AAA"/>
    <property type="match status" value="1"/>
</dbReference>
<dbReference type="SMART" id="SM01086">
    <property type="entry name" value="ClpB_D2-small"/>
    <property type="match status" value="1"/>
</dbReference>
<dbReference type="SUPFAM" id="SSF52540">
    <property type="entry name" value="P-loop containing nucleoside triphosphate hydrolases"/>
    <property type="match status" value="1"/>
</dbReference>
<gene>
    <name evidence="1" type="primary">hslU</name>
    <name type="ordered locus">A1C_02370</name>
</gene>
<accession>A8GN00</accession>
<name>HSLU_RICAH</name>
<keyword id="KW-0067">ATP-binding</keyword>
<keyword id="KW-0143">Chaperone</keyword>
<keyword id="KW-0963">Cytoplasm</keyword>
<keyword id="KW-0547">Nucleotide-binding</keyword>
<proteinExistence type="inferred from homology"/>
<protein>
    <recommendedName>
        <fullName evidence="1">ATP-dependent protease ATPase subunit HslU</fullName>
    </recommendedName>
    <alternativeName>
        <fullName evidence="1">Unfoldase HslU</fullName>
    </alternativeName>
</protein>